<evidence type="ECO:0000255" key="1">
    <source>
        <dbReference type="HAMAP-Rule" id="MF_00366"/>
    </source>
</evidence>
<evidence type="ECO:0000256" key="2">
    <source>
        <dbReference type="SAM" id="MobiDB-lite"/>
    </source>
</evidence>
<keyword id="KW-0240">DNA-directed RNA polymerase</keyword>
<keyword id="KW-0548">Nucleotidyltransferase</keyword>
<keyword id="KW-1185">Reference proteome</keyword>
<keyword id="KW-0804">Transcription</keyword>
<keyword id="KW-0808">Transferase</keyword>
<protein>
    <recommendedName>
        <fullName evidence="1">DNA-directed RNA polymerase subunit omega</fullName>
        <shortName evidence="1">RNAP omega subunit</shortName>
        <ecNumber evidence="1">2.7.7.6</ecNumber>
    </recommendedName>
    <alternativeName>
        <fullName evidence="1">RNA polymerase omega subunit</fullName>
    </alternativeName>
    <alternativeName>
        <fullName evidence="1">Transcriptase subunit omega</fullName>
    </alternativeName>
</protein>
<organism>
    <name type="scientific">Allorhizobium ampelinum (strain ATCC BAA-846 / DSM 112012 / S4)</name>
    <name type="common">Agrobacterium vitis (strain S4)</name>
    <dbReference type="NCBI Taxonomy" id="311402"/>
    <lineage>
        <taxon>Bacteria</taxon>
        <taxon>Pseudomonadati</taxon>
        <taxon>Pseudomonadota</taxon>
        <taxon>Alphaproteobacteria</taxon>
        <taxon>Hyphomicrobiales</taxon>
        <taxon>Rhizobiaceae</taxon>
        <taxon>Rhizobium/Agrobacterium group</taxon>
        <taxon>Allorhizobium</taxon>
        <taxon>Allorhizobium ampelinum</taxon>
    </lineage>
</organism>
<comment type="function">
    <text evidence="1">Promotes RNA polymerase assembly. Latches the N- and C-terminal regions of the beta' subunit thereby facilitating its interaction with the beta and alpha subunits.</text>
</comment>
<comment type="catalytic activity">
    <reaction evidence="1">
        <text>RNA(n) + a ribonucleoside 5'-triphosphate = RNA(n+1) + diphosphate</text>
        <dbReference type="Rhea" id="RHEA:21248"/>
        <dbReference type="Rhea" id="RHEA-COMP:14527"/>
        <dbReference type="Rhea" id="RHEA-COMP:17342"/>
        <dbReference type="ChEBI" id="CHEBI:33019"/>
        <dbReference type="ChEBI" id="CHEBI:61557"/>
        <dbReference type="ChEBI" id="CHEBI:140395"/>
        <dbReference type="EC" id="2.7.7.6"/>
    </reaction>
</comment>
<comment type="subunit">
    <text evidence="1">The RNAP catalytic core consists of 2 alpha, 1 beta, 1 beta' and 1 omega subunit. When a sigma factor is associated with the core the holoenzyme is formed, which can initiate transcription.</text>
</comment>
<comment type="similarity">
    <text evidence="1">Belongs to the RNA polymerase subunit omega family.</text>
</comment>
<name>RPOZ_ALLAM</name>
<feature type="chain" id="PRO_1000133712" description="DNA-directed RNA polymerase subunit omega">
    <location>
        <begin position="1"/>
        <end position="132"/>
    </location>
</feature>
<feature type="region of interest" description="Disordered" evidence="2">
    <location>
        <begin position="76"/>
        <end position="105"/>
    </location>
</feature>
<accession>B9JUN3</accession>
<gene>
    <name evidence="1" type="primary">rpoZ</name>
    <name type="ordered locus">Avi_1441</name>
</gene>
<sequence>MARVTVEDCIDKVDNRFELVLLASHRARQISQGAQITIDRDNDKNPVVALREIADETLSPDDLKEDLIHSLQKHVEVDEPEQDAASIAEGQLTSGSQDEDEMPETVAFDQMSEEELLAGIEGLVPPEKSDDY</sequence>
<proteinExistence type="inferred from homology"/>
<reference key="1">
    <citation type="journal article" date="2009" name="J. Bacteriol.">
        <title>Genome sequences of three Agrobacterium biovars help elucidate the evolution of multichromosome genomes in bacteria.</title>
        <authorList>
            <person name="Slater S.C."/>
            <person name="Goldman B.S."/>
            <person name="Goodner B."/>
            <person name="Setubal J.C."/>
            <person name="Farrand S.K."/>
            <person name="Nester E.W."/>
            <person name="Burr T.J."/>
            <person name="Banta L."/>
            <person name="Dickerman A.W."/>
            <person name="Paulsen I."/>
            <person name="Otten L."/>
            <person name="Suen G."/>
            <person name="Welch R."/>
            <person name="Almeida N.F."/>
            <person name="Arnold F."/>
            <person name="Burton O.T."/>
            <person name="Du Z."/>
            <person name="Ewing A."/>
            <person name="Godsy E."/>
            <person name="Heisel S."/>
            <person name="Houmiel K.L."/>
            <person name="Jhaveri J."/>
            <person name="Lu J."/>
            <person name="Miller N.M."/>
            <person name="Norton S."/>
            <person name="Chen Q."/>
            <person name="Phoolcharoen W."/>
            <person name="Ohlin V."/>
            <person name="Ondrusek D."/>
            <person name="Pride N."/>
            <person name="Stricklin S.L."/>
            <person name="Sun J."/>
            <person name="Wheeler C."/>
            <person name="Wilson L."/>
            <person name="Zhu H."/>
            <person name="Wood D.W."/>
        </authorList>
    </citation>
    <scope>NUCLEOTIDE SEQUENCE [LARGE SCALE GENOMIC DNA]</scope>
    <source>
        <strain>ATCC BAA-846 / DSM 112012 / S4</strain>
    </source>
</reference>
<dbReference type="EC" id="2.7.7.6" evidence="1"/>
<dbReference type="EMBL" id="CP000633">
    <property type="protein sequence ID" value="ACM36028.1"/>
    <property type="molecule type" value="Genomic_DNA"/>
</dbReference>
<dbReference type="RefSeq" id="WP_015915452.1">
    <property type="nucleotide sequence ID" value="NC_011989.1"/>
</dbReference>
<dbReference type="SMR" id="B9JUN3"/>
<dbReference type="STRING" id="311402.Avi_1441"/>
<dbReference type="KEGG" id="avi:Avi_1441"/>
<dbReference type="eggNOG" id="COG1758">
    <property type="taxonomic scope" value="Bacteria"/>
</dbReference>
<dbReference type="HOGENOM" id="CLU_125406_2_0_5"/>
<dbReference type="Proteomes" id="UP000001596">
    <property type="component" value="Chromosome 1"/>
</dbReference>
<dbReference type="GO" id="GO:0000428">
    <property type="term" value="C:DNA-directed RNA polymerase complex"/>
    <property type="evidence" value="ECO:0007669"/>
    <property type="project" value="UniProtKB-KW"/>
</dbReference>
<dbReference type="GO" id="GO:0003677">
    <property type="term" value="F:DNA binding"/>
    <property type="evidence" value="ECO:0007669"/>
    <property type="project" value="UniProtKB-UniRule"/>
</dbReference>
<dbReference type="GO" id="GO:0003899">
    <property type="term" value="F:DNA-directed RNA polymerase activity"/>
    <property type="evidence" value="ECO:0007669"/>
    <property type="project" value="UniProtKB-UniRule"/>
</dbReference>
<dbReference type="GO" id="GO:0006351">
    <property type="term" value="P:DNA-templated transcription"/>
    <property type="evidence" value="ECO:0007669"/>
    <property type="project" value="UniProtKB-UniRule"/>
</dbReference>
<dbReference type="Gene3D" id="3.90.940.10">
    <property type="match status" value="1"/>
</dbReference>
<dbReference type="HAMAP" id="MF_00366">
    <property type="entry name" value="RNApol_bact_RpoZ"/>
    <property type="match status" value="1"/>
</dbReference>
<dbReference type="InterPro" id="IPR003716">
    <property type="entry name" value="DNA-dir_RNA_pol_omega"/>
</dbReference>
<dbReference type="InterPro" id="IPR006110">
    <property type="entry name" value="Pol_omega/Rpo6/RPB6"/>
</dbReference>
<dbReference type="InterPro" id="IPR036161">
    <property type="entry name" value="RPB6/omega-like_sf"/>
</dbReference>
<dbReference type="NCBIfam" id="TIGR00690">
    <property type="entry name" value="rpoZ"/>
    <property type="match status" value="1"/>
</dbReference>
<dbReference type="PANTHER" id="PTHR34476">
    <property type="entry name" value="DNA-DIRECTED RNA POLYMERASE SUBUNIT OMEGA"/>
    <property type="match status" value="1"/>
</dbReference>
<dbReference type="PANTHER" id="PTHR34476:SF1">
    <property type="entry name" value="DNA-DIRECTED RNA POLYMERASE SUBUNIT OMEGA"/>
    <property type="match status" value="1"/>
</dbReference>
<dbReference type="Pfam" id="PF01192">
    <property type="entry name" value="RNA_pol_Rpb6"/>
    <property type="match status" value="1"/>
</dbReference>
<dbReference type="SMART" id="SM01409">
    <property type="entry name" value="RNA_pol_Rpb6"/>
    <property type="match status" value="1"/>
</dbReference>
<dbReference type="SUPFAM" id="SSF63562">
    <property type="entry name" value="RPB6/omega subunit-like"/>
    <property type="match status" value="1"/>
</dbReference>